<reference key="1">
    <citation type="journal article" date="2002" name="Environ. Microbiol.">
        <title>Complete genome sequence and comparative analysis of the metabolically versatile Pseudomonas putida KT2440.</title>
        <authorList>
            <person name="Nelson K.E."/>
            <person name="Weinel C."/>
            <person name="Paulsen I.T."/>
            <person name="Dodson R.J."/>
            <person name="Hilbert H."/>
            <person name="Martins dos Santos V.A.P."/>
            <person name="Fouts D.E."/>
            <person name="Gill S.R."/>
            <person name="Pop M."/>
            <person name="Holmes M."/>
            <person name="Brinkac L.M."/>
            <person name="Beanan M.J."/>
            <person name="DeBoy R.T."/>
            <person name="Daugherty S.C."/>
            <person name="Kolonay J.F."/>
            <person name="Madupu R."/>
            <person name="Nelson W.C."/>
            <person name="White O."/>
            <person name="Peterson J.D."/>
            <person name="Khouri H.M."/>
            <person name="Hance I."/>
            <person name="Chris Lee P."/>
            <person name="Holtzapple E.K."/>
            <person name="Scanlan D."/>
            <person name="Tran K."/>
            <person name="Moazzez A."/>
            <person name="Utterback T.R."/>
            <person name="Rizzo M."/>
            <person name="Lee K."/>
            <person name="Kosack D."/>
            <person name="Moestl D."/>
            <person name="Wedler H."/>
            <person name="Lauber J."/>
            <person name="Stjepandic D."/>
            <person name="Hoheisel J."/>
            <person name="Straetz M."/>
            <person name="Heim S."/>
            <person name="Kiewitz C."/>
            <person name="Eisen J.A."/>
            <person name="Timmis K.N."/>
            <person name="Duesterhoeft A."/>
            <person name="Tuemmler B."/>
            <person name="Fraser C.M."/>
        </authorList>
    </citation>
    <scope>NUCLEOTIDE SEQUENCE [LARGE SCALE GENOMIC DNA]</scope>
    <source>
        <strain>ATCC 47054 / DSM 6125 / CFBP 8728 / NCIMB 11950 / KT2440</strain>
    </source>
</reference>
<gene>
    <name evidence="1" type="primary">lysS</name>
    <name type="ordered locus">PP_1496</name>
</gene>
<sequence>MSDLKTESQDLQQEENALIALRKEKLAAERAKGNAFPNDFRRDSYCNDLQKQYADKTKEELEAAAIPVKVAGRIMLNRGSFMVIQDMTGRIQVYVNRKTLPEETLAAVKTWDLGDIISAEGTLARSGKGDLYVEMTNVRLLTKSLRPLPDKHHGLTDTEQRYRQRYVDLMVNEETRHTFRVRSQVISHIRKFLIERDFLEVETPMLQTIPGGAAAKPFETHHNALDMAMFLRIAPELYLKRLVVGGFEKVFEINRNFRNEGVSTRHNPEFTMLEFYQAYADYRDNMDLTEELFRELAQLVLGSTDVPYGDKVFHFGEPFVRLSVFDSILKYNPELTAADLQDVDRAREIARKAGAKVLGHEGLGKLQVMIFEELVEHKLEQPHFITEYPFEVSPLARRNDDNPAVTDRFELFIGGREIANAYSELNDAEDQAERFLAQVAEKDAGDDEAMHYDADFVRALEYGMPPTAGEGIGIDRLVMLLTNSPSIRDVILFPHMRPQA</sequence>
<accession>Q88MS3</accession>
<organism>
    <name type="scientific">Pseudomonas putida (strain ATCC 47054 / DSM 6125 / CFBP 8728 / NCIMB 11950 / KT2440)</name>
    <dbReference type="NCBI Taxonomy" id="160488"/>
    <lineage>
        <taxon>Bacteria</taxon>
        <taxon>Pseudomonadati</taxon>
        <taxon>Pseudomonadota</taxon>
        <taxon>Gammaproteobacteria</taxon>
        <taxon>Pseudomonadales</taxon>
        <taxon>Pseudomonadaceae</taxon>
        <taxon>Pseudomonas</taxon>
    </lineage>
</organism>
<protein>
    <recommendedName>
        <fullName evidence="1">Lysine--tRNA ligase</fullName>
        <ecNumber evidence="1">6.1.1.6</ecNumber>
    </recommendedName>
    <alternativeName>
        <fullName evidence="1">Lysyl-tRNA synthetase</fullName>
        <shortName evidence="1">LysRS</shortName>
    </alternativeName>
</protein>
<name>SYK_PSEPK</name>
<proteinExistence type="inferred from homology"/>
<keyword id="KW-0030">Aminoacyl-tRNA synthetase</keyword>
<keyword id="KW-0067">ATP-binding</keyword>
<keyword id="KW-0963">Cytoplasm</keyword>
<keyword id="KW-0436">Ligase</keyword>
<keyword id="KW-0460">Magnesium</keyword>
<keyword id="KW-0479">Metal-binding</keyword>
<keyword id="KW-0547">Nucleotide-binding</keyword>
<keyword id="KW-0648">Protein biosynthesis</keyword>
<keyword id="KW-1185">Reference proteome</keyword>
<comment type="catalytic activity">
    <reaction evidence="1">
        <text>tRNA(Lys) + L-lysine + ATP = L-lysyl-tRNA(Lys) + AMP + diphosphate</text>
        <dbReference type="Rhea" id="RHEA:20792"/>
        <dbReference type="Rhea" id="RHEA-COMP:9696"/>
        <dbReference type="Rhea" id="RHEA-COMP:9697"/>
        <dbReference type="ChEBI" id="CHEBI:30616"/>
        <dbReference type="ChEBI" id="CHEBI:32551"/>
        <dbReference type="ChEBI" id="CHEBI:33019"/>
        <dbReference type="ChEBI" id="CHEBI:78442"/>
        <dbReference type="ChEBI" id="CHEBI:78529"/>
        <dbReference type="ChEBI" id="CHEBI:456215"/>
        <dbReference type="EC" id="6.1.1.6"/>
    </reaction>
</comment>
<comment type="cofactor">
    <cofactor evidence="1">
        <name>Mg(2+)</name>
        <dbReference type="ChEBI" id="CHEBI:18420"/>
    </cofactor>
    <text evidence="1">Binds 3 Mg(2+) ions per subunit.</text>
</comment>
<comment type="subunit">
    <text evidence="1">Homodimer.</text>
</comment>
<comment type="subcellular location">
    <subcellularLocation>
        <location evidence="1">Cytoplasm</location>
    </subcellularLocation>
</comment>
<comment type="similarity">
    <text evidence="1">Belongs to the class-II aminoacyl-tRNA synthetase family.</text>
</comment>
<feature type="chain" id="PRO_0000152669" description="Lysine--tRNA ligase">
    <location>
        <begin position="1"/>
        <end position="500"/>
    </location>
</feature>
<feature type="binding site" evidence="1">
    <location>
        <position position="410"/>
    </location>
    <ligand>
        <name>Mg(2+)</name>
        <dbReference type="ChEBI" id="CHEBI:18420"/>
        <label>1</label>
    </ligand>
</feature>
<feature type="binding site" evidence="1">
    <location>
        <position position="417"/>
    </location>
    <ligand>
        <name>Mg(2+)</name>
        <dbReference type="ChEBI" id="CHEBI:18420"/>
        <label>1</label>
    </ligand>
</feature>
<feature type="binding site" evidence="1">
    <location>
        <position position="417"/>
    </location>
    <ligand>
        <name>Mg(2+)</name>
        <dbReference type="ChEBI" id="CHEBI:18420"/>
        <label>2</label>
    </ligand>
</feature>
<evidence type="ECO:0000255" key="1">
    <source>
        <dbReference type="HAMAP-Rule" id="MF_00252"/>
    </source>
</evidence>
<dbReference type="EC" id="6.1.1.6" evidence="1"/>
<dbReference type="EMBL" id="AE015451">
    <property type="protein sequence ID" value="AAN67117.1"/>
    <property type="molecule type" value="Genomic_DNA"/>
</dbReference>
<dbReference type="RefSeq" id="NP_743653.1">
    <property type="nucleotide sequence ID" value="NC_002947.4"/>
</dbReference>
<dbReference type="RefSeq" id="WP_010952588.1">
    <property type="nucleotide sequence ID" value="NZ_CP169744.1"/>
</dbReference>
<dbReference type="SMR" id="Q88MS3"/>
<dbReference type="STRING" id="160488.PP_1496"/>
<dbReference type="PaxDb" id="160488-PP_1496"/>
<dbReference type="GeneID" id="83681970"/>
<dbReference type="KEGG" id="ppu:PP_1496"/>
<dbReference type="PATRIC" id="fig|160488.4.peg.1587"/>
<dbReference type="eggNOG" id="COG1190">
    <property type="taxonomic scope" value="Bacteria"/>
</dbReference>
<dbReference type="HOGENOM" id="CLU_008255_6_0_6"/>
<dbReference type="OrthoDB" id="9801152at2"/>
<dbReference type="PhylomeDB" id="Q88MS3"/>
<dbReference type="BioCyc" id="PPUT160488:G1G01-1587-MONOMER"/>
<dbReference type="Proteomes" id="UP000000556">
    <property type="component" value="Chromosome"/>
</dbReference>
<dbReference type="GO" id="GO:0005829">
    <property type="term" value="C:cytosol"/>
    <property type="evidence" value="ECO:0007669"/>
    <property type="project" value="TreeGrafter"/>
</dbReference>
<dbReference type="GO" id="GO:0005524">
    <property type="term" value="F:ATP binding"/>
    <property type="evidence" value="ECO:0007669"/>
    <property type="project" value="UniProtKB-UniRule"/>
</dbReference>
<dbReference type="GO" id="GO:0004824">
    <property type="term" value="F:lysine-tRNA ligase activity"/>
    <property type="evidence" value="ECO:0007669"/>
    <property type="project" value="UniProtKB-UniRule"/>
</dbReference>
<dbReference type="GO" id="GO:0000287">
    <property type="term" value="F:magnesium ion binding"/>
    <property type="evidence" value="ECO:0007669"/>
    <property type="project" value="UniProtKB-UniRule"/>
</dbReference>
<dbReference type="GO" id="GO:0000049">
    <property type="term" value="F:tRNA binding"/>
    <property type="evidence" value="ECO:0007669"/>
    <property type="project" value="TreeGrafter"/>
</dbReference>
<dbReference type="GO" id="GO:0006430">
    <property type="term" value="P:lysyl-tRNA aminoacylation"/>
    <property type="evidence" value="ECO:0007669"/>
    <property type="project" value="UniProtKB-UniRule"/>
</dbReference>
<dbReference type="CDD" id="cd00775">
    <property type="entry name" value="LysRS_core"/>
    <property type="match status" value="1"/>
</dbReference>
<dbReference type="CDD" id="cd04322">
    <property type="entry name" value="LysRS_N"/>
    <property type="match status" value="1"/>
</dbReference>
<dbReference type="FunFam" id="2.40.50.140:FF:000024">
    <property type="entry name" value="Lysine--tRNA ligase"/>
    <property type="match status" value="1"/>
</dbReference>
<dbReference type="FunFam" id="3.30.930.10:FF:000001">
    <property type="entry name" value="Lysine--tRNA ligase"/>
    <property type="match status" value="1"/>
</dbReference>
<dbReference type="Gene3D" id="3.30.930.10">
    <property type="entry name" value="Bira Bifunctional Protein, Domain 2"/>
    <property type="match status" value="1"/>
</dbReference>
<dbReference type="Gene3D" id="2.40.50.140">
    <property type="entry name" value="Nucleic acid-binding proteins"/>
    <property type="match status" value="1"/>
</dbReference>
<dbReference type="HAMAP" id="MF_00252">
    <property type="entry name" value="Lys_tRNA_synth_class2"/>
    <property type="match status" value="1"/>
</dbReference>
<dbReference type="InterPro" id="IPR004364">
    <property type="entry name" value="Aa-tRNA-synt_II"/>
</dbReference>
<dbReference type="InterPro" id="IPR006195">
    <property type="entry name" value="aa-tRNA-synth_II"/>
</dbReference>
<dbReference type="InterPro" id="IPR045864">
    <property type="entry name" value="aa-tRNA-synth_II/BPL/LPL"/>
</dbReference>
<dbReference type="InterPro" id="IPR002313">
    <property type="entry name" value="Lys-tRNA-ligase_II"/>
</dbReference>
<dbReference type="InterPro" id="IPR044136">
    <property type="entry name" value="Lys-tRNA-ligase_II_N"/>
</dbReference>
<dbReference type="InterPro" id="IPR018149">
    <property type="entry name" value="Lys-tRNA-synth_II_C"/>
</dbReference>
<dbReference type="InterPro" id="IPR012340">
    <property type="entry name" value="NA-bd_OB-fold"/>
</dbReference>
<dbReference type="InterPro" id="IPR004365">
    <property type="entry name" value="NA-bd_OB_tRNA"/>
</dbReference>
<dbReference type="NCBIfam" id="TIGR00499">
    <property type="entry name" value="lysS_bact"/>
    <property type="match status" value="1"/>
</dbReference>
<dbReference type="NCBIfam" id="NF001756">
    <property type="entry name" value="PRK00484.1"/>
    <property type="match status" value="1"/>
</dbReference>
<dbReference type="PANTHER" id="PTHR42918:SF15">
    <property type="entry name" value="LYSINE--TRNA LIGASE, CHLOROPLASTIC_MITOCHONDRIAL"/>
    <property type="match status" value="1"/>
</dbReference>
<dbReference type="PANTHER" id="PTHR42918">
    <property type="entry name" value="LYSYL-TRNA SYNTHETASE"/>
    <property type="match status" value="1"/>
</dbReference>
<dbReference type="Pfam" id="PF00152">
    <property type="entry name" value="tRNA-synt_2"/>
    <property type="match status" value="1"/>
</dbReference>
<dbReference type="Pfam" id="PF01336">
    <property type="entry name" value="tRNA_anti-codon"/>
    <property type="match status" value="1"/>
</dbReference>
<dbReference type="PRINTS" id="PR00982">
    <property type="entry name" value="TRNASYNTHLYS"/>
</dbReference>
<dbReference type="SUPFAM" id="SSF55681">
    <property type="entry name" value="Class II aaRS and biotin synthetases"/>
    <property type="match status" value="1"/>
</dbReference>
<dbReference type="SUPFAM" id="SSF50249">
    <property type="entry name" value="Nucleic acid-binding proteins"/>
    <property type="match status" value="1"/>
</dbReference>
<dbReference type="PROSITE" id="PS50862">
    <property type="entry name" value="AA_TRNA_LIGASE_II"/>
    <property type="match status" value="1"/>
</dbReference>